<gene>
    <name type="ordered locus">MT1294</name>
</gene>
<sequence length="202" mass="22223">MAGTDWLSARRTELAADRILDAAERLFTQRDPASIGMNEIAKAAGCSRATLYRYFDSREALRTAYVHRETRRLGREIMVKIADVVEPAERLLVSITTTLRMVRDNPALAAWFTTTRPPIGGEMAGRSEVIAALAAAFLNSLGPDDPTTVERRARWVVRMLTSLLMFPGRDEADERAMIAEFVVPIVTPASAAARKAGHPGPE</sequence>
<evidence type="ECO:0000255" key="1">
    <source>
        <dbReference type="PROSITE-ProRule" id="PRU00335"/>
    </source>
</evidence>
<dbReference type="EMBL" id="AE000516">
    <property type="protein sequence ID" value="AAK45552.1"/>
    <property type="molecule type" value="Genomic_DNA"/>
</dbReference>
<dbReference type="PIR" id="G70752">
    <property type="entry name" value="G70752"/>
</dbReference>
<dbReference type="RefSeq" id="WP_003406350.1">
    <property type="nucleotide sequence ID" value="NZ_KK341227.1"/>
</dbReference>
<dbReference type="SMR" id="P9WMD4"/>
<dbReference type="KEGG" id="mtc:MT1294"/>
<dbReference type="PATRIC" id="fig|83331.31.peg.1397"/>
<dbReference type="HOGENOM" id="CLU_069356_39_4_11"/>
<dbReference type="Proteomes" id="UP000001020">
    <property type="component" value="Chromosome"/>
</dbReference>
<dbReference type="GO" id="GO:0003700">
    <property type="term" value="F:DNA-binding transcription factor activity"/>
    <property type="evidence" value="ECO:0007669"/>
    <property type="project" value="TreeGrafter"/>
</dbReference>
<dbReference type="GO" id="GO:0000976">
    <property type="term" value="F:transcription cis-regulatory region binding"/>
    <property type="evidence" value="ECO:0007669"/>
    <property type="project" value="TreeGrafter"/>
</dbReference>
<dbReference type="Gene3D" id="1.10.357.10">
    <property type="entry name" value="Tetracycline Repressor, domain 2"/>
    <property type="match status" value="1"/>
</dbReference>
<dbReference type="InterPro" id="IPR009057">
    <property type="entry name" value="Homeodomain-like_sf"/>
</dbReference>
<dbReference type="InterPro" id="IPR050109">
    <property type="entry name" value="HTH-type_TetR-like_transc_reg"/>
</dbReference>
<dbReference type="InterPro" id="IPR001647">
    <property type="entry name" value="HTH_TetR"/>
</dbReference>
<dbReference type="PANTHER" id="PTHR30055">
    <property type="entry name" value="HTH-TYPE TRANSCRIPTIONAL REGULATOR RUTR"/>
    <property type="match status" value="1"/>
</dbReference>
<dbReference type="PANTHER" id="PTHR30055:SF200">
    <property type="entry name" value="HTH-TYPE TRANSCRIPTIONAL REPRESSOR BDCR"/>
    <property type="match status" value="1"/>
</dbReference>
<dbReference type="Pfam" id="PF00440">
    <property type="entry name" value="TetR_N"/>
    <property type="match status" value="1"/>
</dbReference>
<dbReference type="PRINTS" id="PR00455">
    <property type="entry name" value="HTHTETR"/>
</dbReference>
<dbReference type="SUPFAM" id="SSF46689">
    <property type="entry name" value="Homeodomain-like"/>
    <property type="match status" value="1"/>
</dbReference>
<dbReference type="PROSITE" id="PS50977">
    <property type="entry name" value="HTH_TETR_2"/>
    <property type="match status" value="1"/>
</dbReference>
<keyword id="KW-0238">DNA-binding</keyword>
<keyword id="KW-1185">Reference proteome</keyword>
<keyword id="KW-0677">Repeat</keyword>
<keyword id="KW-0804">Transcription</keyword>
<keyword id="KW-0805">Transcription regulation</keyword>
<reference key="1">
    <citation type="journal article" date="2002" name="J. Bacteriol.">
        <title>Whole-genome comparison of Mycobacterium tuberculosis clinical and laboratory strains.</title>
        <authorList>
            <person name="Fleischmann R.D."/>
            <person name="Alland D."/>
            <person name="Eisen J.A."/>
            <person name="Carpenter L."/>
            <person name="White O."/>
            <person name="Peterson J.D."/>
            <person name="DeBoy R.T."/>
            <person name="Dodson R.J."/>
            <person name="Gwinn M.L."/>
            <person name="Haft D.H."/>
            <person name="Hickey E.K."/>
            <person name="Kolonay J.F."/>
            <person name="Nelson W.C."/>
            <person name="Umayam L.A."/>
            <person name="Ermolaeva M.D."/>
            <person name="Salzberg S.L."/>
            <person name="Delcher A."/>
            <person name="Utterback T.R."/>
            <person name="Weidman J.F."/>
            <person name="Khouri H.M."/>
            <person name="Gill J."/>
            <person name="Mikula A."/>
            <person name="Bishai W."/>
            <person name="Jacobs W.R. Jr."/>
            <person name="Venter J.C."/>
            <person name="Fraser C.M."/>
        </authorList>
    </citation>
    <scope>NUCLEOTIDE SEQUENCE [LARGE SCALE GENOMIC DNA]</scope>
    <source>
        <strain>CDC 1551 / Oshkosh</strain>
    </source>
</reference>
<protein>
    <recommendedName>
        <fullName>Uncharacterized HTH-type transcriptional regulator MT1294</fullName>
    </recommendedName>
</protein>
<name>Y1255_MYCTO</name>
<feature type="chain" id="PRO_0000427323" description="Uncharacterized HTH-type transcriptional regulator MT1294">
    <location>
        <begin position="1"/>
        <end position="202"/>
    </location>
</feature>
<feature type="domain" description="HTH tetR-type" evidence="1">
    <location>
        <begin position="13"/>
        <end position="73"/>
    </location>
</feature>
<feature type="DNA-binding region" description="H-T-H motif" evidence="1">
    <location>
        <begin position="36"/>
        <end position="55"/>
    </location>
</feature>
<proteinExistence type="predicted"/>
<accession>P9WMD4</accession>
<accession>L0T641</accession>
<accession>Q11063</accession>
<organism>
    <name type="scientific">Mycobacterium tuberculosis (strain CDC 1551 / Oshkosh)</name>
    <dbReference type="NCBI Taxonomy" id="83331"/>
    <lineage>
        <taxon>Bacteria</taxon>
        <taxon>Bacillati</taxon>
        <taxon>Actinomycetota</taxon>
        <taxon>Actinomycetes</taxon>
        <taxon>Mycobacteriales</taxon>
        <taxon>Mycobacteriaceae</taxon>
        <taxon>Mycobacterium</taxon>
        <taxon>Mycobacterium tuberculosis complex</taxon>
    </lineage>
</organism>